<keyword id="KW-0175">Coiled coil</keyword>
<keyword id="KW-0256">Endoplasmic reticulum</keyword>
<keyword id="KW-0931">ER-Golgi transport</keyword>
<keyword id="KW-0333">Golgi apparatus</keyword>
<keyword id="KW-0472">Membrane</keyword>
<keyword id="KW-0653">Protein transport</keyword>
<keyword id="KW-1185">Reference proteome</keyword>
<keyword id="KW-0812">Transmembrane</keyword>
<keyword id="KW-1133">Transmembrane helix</keyword>
<keyword id="KW-0813">Transport</keyword>
<feature type="chain" id="PRO_0000252244" description="Vesicle-trafficking protein SEC22b-B">
    <location>
        <begin position="1"/>
        <end position="215"/>
    </location>
</feature>
<feature type="topological domain" description="Cytoplasmic" evidence="3">
    <location>
        <begin position="1"/>
        <end position="190"/>
    </location>
</feature>
<feature type="transmembrane region" description="Helical" evidence="3">
    <location>
        <begin position="191"/>
        <end position="213"/>
    </location>
</feature>
<feature type="topological domain" description="Lumenal" evidence="3">
    <location>
        <begin position="214"/>
        <end position="215"/>
    </location>
</feature>
<feature type="domain" description="Longin" evidence="4">
    <location>
        <begin position="6"/>
        <end position="119"/>
    </location>
</feature>
<feature type="domain" description="v-SNARE coiled-coil homology" evidence="5">
    <location>
        <begin position="134"/>
        <end position="194"/>
    </location>
</feature>
<name>S22BB_DANRE</name>
<proteinExistence type="evidence at transcript level"/>
<organism>
    <name type="scientific">Danio rerio</name>
    <name type="common">Zebrafish</name>
    <name type="synonym">Brachydanio rerio</name>
    <dbReference type="NCBI Taxonomy" id="7955"/>
    <lineage>
        <taxon>Eukaryota</taxon>
        <taxon>Metazoa</taxon>
        <taxon>Chordata</taxon>
        <taxon>Craniata</taxon>
        <taxon>Vertebrata</taxon>
        <taxon>Euteleostomi</taxon>
        <taxon>Actinopterygii</taxon>
        <taxon>Neopterygii</taxon>
        <taxon>Teleostei</taxon>
        <taxon>Ostariophysi</taxon>
        <taxon>Cypriniformes</taxon>
        <taxon>Danionidae</taxon>
        <taxon>Danioninae</taxon>
        <taxon>Danio</taxon>
    </lineage>
</organism>
<comment type="function">
    <text evidence="1 2">SNARE involved in targeting and fusion of ER-derived transport vesicles with the Golgi complex as well as Golgi-derived retrograde transport vesicles with the ER.</text>
</comment>
<comment type="subunit">
    <text evidence="1">Component of 2 distinct SNARE complexes.</text>
</comment>
<comment type="subcellular location">
    <subcellularLocation>
        <location evidence="2">Endoplasmic reticulum membrane</location>
        <topology evidence="2">Single-pass type IV membrane protein</topology>
    </subcellularLocation>
    <subcellularLocation>
        <location evidence="2">Endoplasmic reticulum-Golgi intermediate compartment membrane</location>
    </subcellularLocation>
    <subcellularLocation>
        <location evidence="2">Golgi apparatus</location>
        <location evidence="2">cis-Golgi network membrane</location>
    </subcellularLocation>
    <subcellularLocation>
        <location evidence="2">Golgi apparatus</location>
        <location evidence="2">trans-Golgi network membrane</location>
    </subcellularLocation>
    <subcellularLocation>
        <location evidence="1">Melanosome</location>
    </subcellularLocation>
</comment>
<comment type="similarity">
    <text evidence="3">Belongs to the synaptobrevin family.</text>
</comment>
<protein>
    <recommendedName>
        <fullName>Vesicle-trafficking protein SEC22b-B</fullName>
    </recommendedName>
    <alternativeName>
        <fullName>SEC22 vesicle-trafficking protein homolog B-B</fullName>
    </alternativeName>
</protein>
<evidence type="ECO:0000250" key="1">
    <source>
        <dbReference type="UniProtKB" id="O75396"/>
    </source>
</evidence>
<evidence type="ECO:0000250" key="2">
    <source>
        <dbReference type="UniProtKB" id="Q4KM74"/>
    </source>
</evidence>
<evidence type="ECO:0000255" key="3"/>
<evidence type="ECO:0000255" key="4">
    <source>
        <dbReference type="PROSITE-ProRule" id="PRU00231"/>
    </source>
</evidence>
<evidence type="ECO:0000255" key="5">
    <source>
        <dbReference type="PROSITE-ProRule" id="PRU00290"/>
    </source>
</evidence>
<evidence type="ECO:0000312" key="6">
    <source>
        <dbReference type="EMBL" id="AAH55515.1"/>
    </source>
</evidence>
<evidence type="ECO:0000312" key="7">
    <source>
        <dbReference type="ZFIN" id="ZDB-GENE-030131-5488"/>
    </source>
</evidence>
<dbReference type="EMBL" id="BC055515">
    <property type="protein sequence ID" value="AAH55515.1"/>
    <property type="molecule type" value="mRNA"/>
</dbReference>
<dbReference type="RefSeq" id="NP_958459.1">
    <property type="nucleotide sequence ID" value="NM_201302.2"/>
</dbReference>
<dbReference type="SMR" id="Q7SXP0"/>
<dbReference type="BioGRID" id="84452">
    <property type="interactions" value="1"/>
</dbReference>
<dbReference type="FunCoup" id="Q7SXP0">
    <property type="interactions" value="2628"/>
</dbReference>
<dbReference type="STRING" id="7955.ENSDARP00000136767"/>
<dbReference type="PaxDb" id="7955-ENSDARP00000114891"/>
<dbReference type="Ensembl" id="ENSDART00000159044">
    <property type="protein sequence ID" value="ENSDARP00000136767"/>
    <property type="gene ID" value="ENSDARG00000100435"/>
</dbReference>
<dbReference type="GeneID" id="327277"/>
<dbReference type="KEGG" id="dre:327277"/>
<dbReference type="AGR" id="ZFIN:ZDB-GENE-030131-5488"/>
<dbReference type="CTD" id="327277"/>
<dbReference type="ZFIN" id="ZDB-GENE-030131-5488">
    <property type="gene designation" value="sec22bb"/>
</dbReference>
<dbReference type="eggNOG" id="KOG0862">
    <property type="taxonomic scope" value="Eukaryota"/>
</dbReference>
<dbReference type="HOGENOM" id="CLU_054453_4_1_1"/>
<dbReference type="InParanoid" id="Q7SXP0"/>
<dbReference type="OrthoDB" id="1719357at2759"/>
<dbReference type="PhylomeDB" id="Q7SXP0"/>
<dbReference type="Reactome" id="R-DRE-204005">
    <property type="pathway name" value="COPII-mediated vesicle transport"/>
</dbReference>
<dbReference type="Reactome" id="R-DRE-6811434">
    <property type="pathway name" value="COPI-dependent Golgi-to-ER retrograde traffic"/>
</dbReference>
<dbReference type="PRO" id="PR:Q7SXP0"/>
<dbReference type="Proteomes" id="UP000000437">
    <property type="component" value="Chromosome 8"/>
</dbReference>
<dbReference type="Bgee" id="ENSDARG00000100435">
    <property type="expression patterns" value="Expressed in brain and 27 other cell types or tissues"/>
</dbReference>
<dbReference type="ExpressionAtlas" id="Q7SXP0">
    <property type="expression patterns" value="baseline and differential"/>
</dbReference>
<dbReference type="GO" id="GO:0005789">
    <property type="term" value="C:endoplasmic reticulum membrane"/>
    <property type="evidence" value="ECO:0000318"/>
    <property type="project" value="GO_Central"/>
</dbReference>
<dbReference type="GO" id="GO:0033116">
    <property type="term" value="C:endoplasmic reticulum-Golgi intermediate compartment membrane"/>
    <property type="evidence" value="ECO:0007669"/>
    <property type="project" value="UniProtKB-SubCell"/>
</dbReference>
<dbReference type="GO" id="GO:0012507">
    <property type="term" value="C:ER to Golgi transport vesicle membrane"/>
    <property type="evidence" value="ECO:0000318"/>
    <property type="project" value="GO_Central"/>
</dbReference>
<dbReference type="GO" id="GO:0000139">
    <property type="term" value="C:Golgi membrane"/>
    <property type="evidence" value="ECO:0000318"/>
    <property type="project" value="GO_Central"/>
</dbReference>
<dbReference type="GO" id="GO:0042470">
    <property type="term" value="C:melanosome"/>
    <property type="evidence" value="ECO:0007669"/>
    <property type="project" value="UniProtKB-SubCell"/>
</dbReference>
<dbReference type="GO" id="GO:0031201">
    <property type="term" value="C:SNARE complex"/>
    <property type="evidence" value="ECO:0000318"/>
    <property type="project" value="GO_Central"/>
</dbReference>
<dbReference type="GO" id="GO:0005484">
    <property type="term" value="F:SNAP receptor activity"/>
    <property type="evidence" value="ECO:0000318"/>
    <property type="project" value="GO_Central"/>
</dbReference>
<dbReference type="GO" id="GO:0006888">
    <property type="term" value="P:endoplasmic reticulum to Golgi vesicle-mediated transport"/>
    <property type="evidence" value="ECO:0000318"/>
    <property type="project" value="GO_Central"/>
</dbReference>
<dbReference type="GO" id="GO:0015031">
    <property type="term" value="P:protein transport"/>
    <property type="evidence" value="ECO:0007669"/>
    <property type="project" value="UniProtKB-KW"/>
</dbReference>
<dbReference type="GO" id="GO:0006890">
    <property type="term" value="P:retrograde vesicle-mediated transport, Golgi to endoplasmic reticulum"/>
    <property type="evidence" value="ECO:0000318"/>
    <property type="project" value="GO_Central"/>
</dbReference>
<dbReference type="GO" id="GO:0048280">
    <property type="term" value="P:vesicle fusion with Golgi apparatus"/>
    <property type="evidence" value="ECO:0000318"/>
    <property type="project" value="GO_Central"/>
</dbReference>
<dbReference type="CDD" id="cd14824">
    <property type="entry name" value="Longin"/>
    <property type="match status" value="1"/>
</dbReference>
<dbReference type="CDD" id="cd15866">
    <property type="entry name" value="R-SNARE_SEC22"/>
    <property type="match status" value="1"/>
</dbReference>
<dbReference type="FunFam" id="1.20.5.110:FF:000019">
    <property type="entry name" value="Vesicle-trafficking protein SEC22b"/>
    <property type="match status" value="1"/>
</dbReference>
<dbReference type="FunFam" id="3.30.450.50:FF:000004">
    <property type="entry name" value="vesicle-trafficking protein SEC22b"/>
    <property type="match status" value="1"/>
</dbReference>
<dbReference type="Gene3D" id="1.20.5.110">
    <property type="match status" value="1"/>
</dbReference>
<dbReference type="Gene3D" id="3.30.450.50">
    <property type="entry name" value="Longin domain"/>
    <property type="match status" value="1"/>
</dbReference>
<dbReference type="InterPro" id="IPR011012">
    <property type="entry name" value="Longin-like_dom_sf"/>
</dbReference>
<dbReference type="InterPro" id="IPR010908">
    <property type="entry name" value="Longin_dom"/>
</dbReference>
<dbReference type="InterPro" id="IPR044565">
    <property type="entry name" value="Sec22"/>
</dbReference>
<dbReference type="InterPro" id="IPR042855">
    <property type="entry name" value="V_SNARE_CC"/>
</dbReference>
<dbReference type="PANTHER" id="PTHR45837">
    <property type="entry name" value="VESICLE-TRAFFICKING PROTEIN SEC22B"/>
    <property type="match status" value="1"/>
</dbReference>
<dbReference type="Pfam" id="PF13774">
    <property type="entry name" value="Longin"/>
    <property type="match status" value="1"/>
</dbReference>
<dbReference type="Pfam" id="PF00957">
    <property type="entry name" value="Synaptobrevin"/>
    <property type="match status" value="1"/>
</dbReference>
<dbReference type="SMART" id="SM01270">
    <property type="entry name" value="Longin"/>
    <property type="match status" value="1"/>
</dbReference>
<dbReference type="SUPFAM" id="SSF58038">
    <property type="entry name" value="SNARE fusion complex"/>
    <property type="match status" value="1"/>
</dbReference>
<dbReference type="SUPFAM" id="SSF64356">
    <property type="entry name" value="SNARE-like"/>
    <property type="match status" value="1"/>
</dbReference>
<dbReference type="PROSITE" id="PS50859">
    <property type="entry name" value="LONGIN"/>
    <property type="match status" value="1"/>
</dbReference>
<dbReference type="PROSITE" id="PS50892">
    <property type="entry name" value="V_SNARE"/>
    <property type="match status" value="1"/>
</dbReference>
<accession>Q7SXP0</accession>
<sequence length="215" mass="24689">MVLLTMIARLADGLPLAASMQEDEQMGRDLQQYQSQAKQLFRKLNEQSPNRCTLEAGSMSFHYVIEKGVCYLVLCEAGFPKKLAFAYLEDLQAEFHEQHGKKVPTVSRPYSFIEFDTYIQKTKKSYIDSRARRNLSNINTELQDVQRIMVANIEEVLQRGEALSALDSKASNLSSLSKKYRSDAKYLNTRSTYAKLAAGGVFFIMLIVYIRFWWL</sequence>
<reference evidence="6" key="1">
    <citation type="submission" date="2003-08" db="EMBL/GenBank/DDBJ databases">
        <authorList>
            <consortium name="NIH - Zebrafish Gene Collection (ZGC) project"/>
        </authorList>
    </citation>
    <scope>NUCLEOTIDE SEQUENCE [LARGE SCALE MRNA]</scope>
    <source>
        <strain>SJD</strain>
    </source>
</reference>
<gene>
    <name evidence="6" type="primary">sec22bb</name>
    <name evidence="7" type="synonym">sec22l1b</name>
</gene>